<keyword id="KW-1185">Reference proteome</keyword>
<dbReference type="EMBL" id="AAFI02000047">
    <property type="protein sequence ID" value="EAL66279.1"/>
    <property type="molecule type" value="Genomic_DNA"/>
</dbReference>
<dbReference type="RefSeq" id="XP_640252.1">
    <property type="nucleotide sequence ID" value="XM_635160.1"/>
</dbReference>
<dbReference type="FunCoup" id="Q54SP9">
    <property type="interactions" value="243"/>
</dbReference>
<dbReference type="PaxDb" id="44689-DDB0252798"/>
<dbReference type="EnsemblProtists" id="EAL66279">
    <property type="protein sequence ID" value="EAL66279"/>
    <property type="gene ID" value="DDB_G0282315"/>
</dbReference>
<dbReference type="GeneID" id="8623511"/>
<dbReference type="KEGG" id="ddi:DDB_G0282315"/>
<dbReference type="dictyBase" id="DDB_G0282315"/>
<dbReference type="VEuPathDB" id="AmoebaDB:DDB_G0282319"/>
<dbReference type="HOGENOM" id="CLU_181850_1_0_1"/>
<dbReference type="InParanoid" id="Q54SP9"/>
<dbReference type="PhylomeDB" id="Q54SP9"/>
<dbReference type="PRO" id="PR:Q54SP9"/>
<dbReference type="Proteomes" id="UP000002195">
    <property type="component" value="Chromosome 3"/>
</dbReference>
<dbReference type="GO" id="GO:0030587">
    <property type="term" value="P:sorocarp development"/>
    <property type="evidence" value="ECO:0000318"/>
    <property type="project" value="GO_Central"/>
</dbReference>
<dbReference type="InterPro" id="IPR050533">
    <property type="entry name" value="HssA/B-like_chaperone"/>
</dbReference>
<dbReference type="InterPro" id="IPR008455">
    <property type="entry name" value="HssA/B-related"/>
</dbReference>
<dbReference type="PANTHER" id="PTHR31059">
    <property type="entry name" value="HSSA/B-LIKE PROTEIN 1-RELATED-RELATED"/>
    <property type="match status" value="1"/>
</dbReference>
<dbReference type="PANTHER" id="PTHR31059:SF5">
    <property type="entry name" value="HSSA_B-LIKE PROTEIN 1-RELATED"/>
    <property type="match status" value="1"/>
</dbReference>
<dbReference type="Pfam" id="PF05710">
    <property type="entry name" value="Coiled"/>
    <property type="match status" value="1"/>
</dbReference>
<proteinExistence type="inferred from homology"/>
<organism>
    <name type="scientific">Dictyostelium discoideum</name>
    <name type="common">Social amoeba</name>
    <dbReference type="NCBI Taxonomy" id="44689"/>
    <lineage>
        <taxon>Eukaryota</taxon>
        <taxon>Amoebozoa</taxon>
        <taxon>Evosea</taxon>
        <taxon>Eumycetozoa</taxon>
        <taxon>Dictyostelia</taxon>
        <taxon>Dictyosteliales</taxon>
        <taxon>Dictyosteliaceae</taxon>
        <taxon>Dictyostelium</taxon>
    </lineage>
</organism>
<reference key="1">
    <citation type="journal article" date="2005" name="Nature">
        <title>The genome of the social amoeba Dictyostelium discoideum.</title>
        <authorList>
            <person name="Eichinger L."/>
            <person name="Pachebat J.A."/>
            <person name="Gloeckner G."/>
            <person name="Rajandream M.A."/>
            <person name="Sucgang R."/>
            <person name="Berriman M."/>
            <person name="Song J."/>
            <person name="Olsen R."/>
            <person name="Szafranski K."/>
            <person name="Xu Q."/>
            <person name="Tunggal B."/>
            <person name="Kummerfeld S."/>
            <person name="Madera M."/>
            <person name="Konfortov B.A."/>
            <person name="Rivero F."/>
            <person name="Bankier A.T."/>
            <person name="Lehmann R."/>
            <person name="Hamlin N."/>
            <person name="Davies R."/>
            <person name="Gaudet P."/>
            <person name="Fey P."/>
            <person name="Pilcher K."/>
            <person name="Chen G."/>
            <person name="Saunders D."/>
            <person name="Sodergren E.J."/>
            <person name="Davis P."/>
            <person name="Kerhornou A."/>
            <person name="Nie X."/>
            <person name="Hall N."/>
            <person name="Anjard C."/>
            <person name="Hemphill L."/>
            <person name="Bason N."/>
            <person name="Farbrother P."/>
            <person name="Desany B."/>
            <person name="Just E."/>
            <person name="Morio T."/>
            <person name="Rost R."/>
            <person name="Churcher C.M."/>
            <person name="Cooper J."/>
            <person name="Haydock S."/>
            <person name="van Driessche N."/>
            <person name="Cronin A."/>
            <person name="Goodhead I."/>
            <person name="Muzny D.M."/>
            <person name="Mourier T."/>
            <person name="Pain A."/>
            <person name="Lu M."/>
            <person name="Harper D."/>
            <person name="Lindsay R."/>
            <person name="Hauser H."/>
            <person name="James K.D."/>
            <person name="Quiles M."/>
            <person name="Madan Babu M."/>
            <person name="Saito T."/>
            <person name="Buchrieser C."/>
            <person name="Wardroper A."/>
            <person name="Felder M."/>
            <person name="Thangavelu M."/>
            <person name="Johnson D."/>
            <person name="Knights A."/>
            <person name="Loulseged H."/>
            <person name="Mungall K.L."/>
            <person name="Oliver K."/>
            <person name="Price C."/>
            <person name="Quail M.A."/>
            <person name="Urushihara H."/>
            <person name="Hernandez J."/>
            <person name="Rabbinowitsch E."/>
            <person name="Steffen D."/>
            <person name="Sanders M."/>
            <person name="Ma J."/>
            <person name="Kohara Y."/>
            <person name="Sharp S."/>
            <person name="Simmonds M.N."/>
            <person name="Spiegler S."/>
            <person name="Tivey A."/>
            <person name="Sugano S."/>
            <person name="White B."/>
            <person name="Walker D."/>
            <person name="Woodward J.R."/>
            <person name="Winckler T."/>
            <person name="Tanaka Y."/>
            <person name="Shaulsky G."/>
            <person name="Schleicher M."/>
            <person name="Weinstock G.M."/>
            <person name="Rosenthal A."/>
            <person name="Cox E.C."/>
            <person name="Chisholm R.L."/>
            <person name="Gibbs R.A."/>
            <person name="Loomis W.F."/>
            <person name="Platzer M."/>
            <person name="Kay R.R."/>
            <person name="Williams J.G."/>
            <person name="Dear P.H."/>
            <person name="Noegel A.A."/>
            <person name="Barrell B.G."/>
            <person name="Kuspa A."/>
        </authorList>
    </citation>
    <scope>NUCLEOTIDE SEQUENCE [LARGE SCALE GENOMIC DNA]</scope>
    <source>
        <strain>AX4</strain>
    </source>
</reference>
<sequence>MTILSAITSISRPNKISKSVISSNGGSSLSMGSNSVSCYNACGGGSSYSYSSSYSGSGLDYSYKANYSSSTGYNSSVVIASSTCHCS</sequence>
<accession>Q54SP9</accession>
<gene>
    <name type="primary">hssl54</name>
    <name type="ORF">DDB_G0282315</name>
</gene>
<name>HSL54_DICDI</name>
<evidence type="ECO:0000305" key="1"/>
<feature type="chain" id="PRO_0000330422" description="HssA/B-like protein 54">
    <location>
        <begin position="1"/>
        <end position="87"/>
    </location>
</feature>
<protein>
    <recommendedName>
        <fullName>HssA/B-like protein 54</fullName>
    </recommendedName>
</protein>
<comment type="similarity">
    <text evidence="1">Belongs to the hssA/B family.</text>
</comment>